<sequence length="361" mass="39537">MLLWLTNFLSQHFHAFRVFNYLTFRSIVSALTALILVLSLSPRLIKYLVSLQVGQMVRNDGPQTHLKKSGTPTMGGVLIIVAIVISVLLWGDLSNRFIWVILLVTVAFSAIGWMDDYRKIIRKNSKGLSARSKYLLQSIIGALAAVYLYFSATTGAETALVIPFLKNVLPNLGLFYIVLAYFVIVGSSNAVNLTDGLDGLALMPTVMIGAALGVFAYTTGNHFFAQYLAIPYIPGAGEVVVFCSALVGAGLGFLWYNTYPAQVFMGDVGSLGLGAALGVTAVVVRQELVYFLMGGIFVAETLSVILQVGYFKLSGGKRIFRMAPLHHHFELKGWPEPKVIVRFWIITFILVLCGLATLKLR</sequence>
<feature type="chain" id="PRO_1000090616" description="Phospho-N-acetylmuramoyl-pentapeptide-transferase">
    <location>
        <begin position="1"/>
        <end position="361"/>
    </location>
</feature>
<feature type="transmembrane region" description="Helical" evidence="1">
    <location>
        <begin position="18"/>
        <end position="38"/>
    </location>
</feature>
<feature type="transmembrane region" description="Helical" evidence="1">
    <location>
        <begin position="73"/>
        <end position="93"/>
    </location>
</feature>
<feature type="transmembrane region" description="Helical" evidence="1">
    <location>
        <begin position="97"/>
        <end position="117"/>
    </location>
</feature>
<feature type="transmembrane region" description="Helical" evidence="1">
    <location>
        <begin position="135"/>
        <end position="155"/>
    </location>
</feature>
<feature type="transmembrane region" description="Helical" evidence="1">
    <location>
        <begin position="168"/>
        <end position="188"/>
    </location>
</feature>
<feature type="transmembrane region" description="Helical" evidence="1">
    <location>
        <begin position="196"/>
        <end position="216"/>
    </location>
</feature>
<feature type="transmembrane region" description="Helical" evidence="1">
    <location>
        <begin position="235"/>
        <end position="255"/>
    </location>
</feature>
<feature type="transmembrane region" description="Helical" evidence="1">
    <location>
        <begin position="263"/>
        <end position="283"/>
    </location>
</feature>
<feature type="transmembrane region" description="Helical" evidence="1">
    <location>
        <begin position="288"/>
        <end position="308"/>
    </location>
</feature>
<feature type="transmembrane region" description="Helical" evidence="1">
    <location>
        <begin position="338"/>
        <end position="358"/>
    </location>
</feature>
<keyword id="KW-0131">Cell cycle</keyword>
<keyword id="KW-0132">Cell division</keyword>
<keyword id="KW-0997">Cell inner membrane</keyword>
<keyword id="KW-1003">Cell membrane</keyword>
<keyword id="KW-0133">Cell shape</keyword>
<keyword id="KW-0961">Cell wall biogenesis/degradation</keyword>
<keyword id="KW-0460">Magnesium</keyword>
<keyword id="KW-0472">Membrane</keyword>
<keyword id="KW-0479">Metal-binding</keyword>
<keyword id="KW-0573">Peptidoglycan synthesis</keyword>
<keyword id="KW-0808">Transferase</keyword>
<keyword id="KW-0812">Transmembrane</keyword>
<keyword id="KW-1133">Transmembrane helix</keyword>
<organism>
    <name type="scientific">Coxiella burnetii (strain CbuG_Q212)</name>
    <name type="common">Coxiella burnetii (strain Q212)</name>
    <dbReference type="NCBI Taxonomy" id="434923"/>
    <lineage>
        <taxon>Bacteria</taxon>
        <taxon>Pseudomonadati</taxon>
        <taxon>Pseudomonadota</taxon>
        <taxon>Gammaproteobacteria</taxon>
        <taxon>Legionellales</taxon>
        <taxon>Coxiellaceae</taxon>
        <taxon>Coxiella</taxon>
    </lineage>
</organism>
<name>MRAY_COXB2</name>
<reference key="1">
    <citation type="journal article" date="2009" name="Infect. Immun.">
        <title>Comparative genomics reveal extensive transposon-mediated genomic plasticity and diversity among potential effector proteins within the genus Coxiella.</title>
        <authorList>
            <person name="Beare P.A."/>
            <person name="Unsworth N."/>
            <person name="Andoh M."/>
            <person name="Voth D.E."/>
            <person name="Omsland A."/>
            <person name="Gilk S.D."/>
            <person name="Williams K.P."/>
            <person name="Sobral B.W."/>
            <person name="Kupko J.J. III"/>
            <person name="Porcella S.F."/>
            <person name="Samuel J.E."/>
            <person name="Heinzen R.A."/>
        </authorList>
    </citation>
    <scope>NUCLEOTIDE SEQUENCE [LARGE SCALE GENOMIC DNA]</scope>
    <source>
        <strain>CbuG_Q212</strain>
    </source>
</reference>
<gene>
    <name evidence="1" type="primary">mraY</name>
    <name type="ordered locus">CbuG_1888</name>
</gene>
<evidence type="ECO:0000255" key="1">
    <source>
        <dbReference type="HAMAP-Rule" id="MF_00038"/>
    </source>
</evidence>
<dbReference type="EC" id="2.7.8.13" evidence="1"/>
<dbReference type="EMBL" id="CP001019">
    <property type="protein sequence ID" value="ACJ19136.1"/>
    <property type="molecule type" value="Genomic_DNA"/>
</dbReference>
<dbReference type="RefSeq" id="WP_005769458.1">
    <property type="nucleotide sequence ID" value="NC_011527.1"/>
</dbReference>
<dbReference type="SMR" id="B6J2Q9"/>
<dbReference type="KEGG" id="cbg:CbuG_1888"/>
<dbReference type="HOGENOM" id="CLU_023982_0_0_6"/>
<dbReference type="UniPathway" id="UPA00219"/>
<dbReference type="GO" id="GO:0005886">
    <property type="term" value="C:plasma membrane"/>
    <property type="evidence" value="ECO:0007669"/>
    <property type="project" value="UniProtKB-SubCell"/>
</dbReference>
<dbReference type="GO" id="GO:0046872">
    <property type="term" value="F:metal ion binding"/>
    <property type="evidence" value="ECO:0007669"/>
    <property type="project" value="UniProtKB-KW"/>
</dbReference>
<dbReference type="GO" id="GO:0008963">
    <property type="term" value="F:phospho-N-acetylmuramoyl-pentapeptide-transferase activity"/>
    <property type="evidence" value="ECO:0007669"/>
    <property type="project" value="UniProtKB-UniRule"/>
</dbReference>
<dbReference type="GO" id="GO:0051992">
    <property type="term" value="F:UDP-N-acetylmuramoyl-L-alanyl-D-glutamyl-meso-2,6-diaminopimelyl-D-alanyl-D-alanine:undecaprenyl-phosphate transferase activity"/>
    <property type="evidence" value="ECO:0007669"/>
    <property type="project" value="RHEA"/>
</dbReference>
<dbReference type="GO" id="GO:0051301">
    <property type="term" value="P:cell division"/>
    <property type="evidence" value="ECO:0007669"/>
    <property type="project" value="UniProtKB-KW"/>
</dbReference>
<dbReference type="GO" id="GO:0071555">
    <property type="term" value="P:cell wall organization"/>
    <property type="evidence" value="ECO:0007669"/>
    <property type="project" value="UniProtKB-KW"/>
</dbReference>
<dbReference type="GO" id="GO:0009252">
    <property type="term" value="P:peptidoglycan biosynthetic process"/>
    <property type="evidence" value="ECO:0007669"/>
    <property type="project" value="UniProtKB-UniRule"/>
</dbReference>
<dbReference type="GO" id="GO:0008360">
    <property type="term" value="P:regulation of cell shape"/>
    <property type="evidence" value="ECO:0007669"/>
    <property type="project" value="UniProtKB-KW"/>
</dbReference>
<dbReference type="CDD" id="cd06852">
    <property type="entry name" value="GT_MraY"/>
    <property type="match status" value="1"/>
</dbReference>
<dbReference type="HAMAP" id="MF_00038">
    <property type="entry name" value="MraY"/>
    <property type="match status" value="1"/>
</dbReference>
<dbReference type="InterPro" id="IPR000715">
    <property type="entry name" value="Glycosyl_transferase_4"/>
</dbReference>
<dbReference type="InterPro" id="IPR003524">
    <property type="entry name" value="PNAcMuramoyl-5peptid_Trfase"/>
</dbReference>
<dbReference type="InterPro" id="IPR018480">
    <property type="entry name" value="PNAcMuramoyl-5peptid_Trfase_CS"/>
</dbReference>
<dbReference type="NCBIfam" id="TIGR00445">
    <property type="entry name" value="mraY"/>
    <property type="match status" value="1"/>
</dbReference>
<dbReference type="PANTHER" id="PTHR22926">
    <property type="entry name" value="PHOSPHO-N-ACETYLMURAMOYL-PENTAPEPTIDE-TRANSFERASE"/>
    <property type="match status" value="1"/>
</dbReference>
<dbReference type="PANTHER" id="PTHR22926:SF5">
    <property type="entry name" value="PHOSPHO-N-ACETYLMURAMOYL-PENTAPEPTIDE-TRANSFERASE HOMOLOG"/>
    <property type="match status" value="1"/>
</dbReference>
<dbReference type="Pfam" id="PF00953">
    <property type="entry name" value="Glycos_transf_4"/>
    <property type="match status" value="1"/>
</dbReference>
<dbReference type="Pfam" id="PF10555">
    <property type="entry name" value="MraY_sig1"/>
    <property type="match status" value="1"/>
</dbReference>
<dbReference type="PROSITE" id="PS01347">
    <property type="entry name" value="MRAY_1"/>
    <property type="match status" value="1"/>
</dbReference>
<dbReference type="PROSITE" id="PS01348">
    <property type="entry name" value="MRAY_2"/>
    <property type="match status" value="1"/>
</dbReference>
<comment type="function">
    <text evidence="1">Catalyzes the initial step of the lipid cycle reactions in the biosynthesis of the cell wall peptidoglycan: transfers peptidoglycan precursor phospho-MurNAc-pentapeptide from UDP-MurNAc-pentapeptide onto the lipid carrier undecaprenyl phosphate, yielding undecaprenyl-pyrophosphoryl-MurNAc-pentapeptide, known as lipid I.</text>
</comment>
<comment type="catalytic activity">
    <reaction evidence="1">
        <text>UDP-N-acetyl-alpha-D-muramoyl-L-alanyl-gamma-D-glutamyl-meso-2,6-diaminopimeloyl-D-alanyl-D-alanine + di-trans,octa-cis-undecaprenyl phosphate = di-trans,octa-cis-undecaprenyl diphospho-N-acetyl-alpha-D-muramoyl-L-alanyl-D-glutamyl-meso-2,6-diaminopimeloyl-D-alanyl-D-alanine + UMP</text>
        <dbReference type="Rhea" id="RHEA:28386"/>
        <dbReference type="ChEBI" id="CHEBI:57865"/>
        <dbReference type="ChEBI" id="CHEBI:60392"/>
        <dbReference type="ChEBI" id="CHEBI:61386"/>
        <dbReference type="ChEBI" id="CHEBI:61387"/>
        <dbReference type="EC" id="2.7.8.13"/>
    </reaction>
</comment>
<comment type="cofactor">
    <cofactor evidence="1">
        <name>Mg(2+)</name>
        <dbReference type="ChEBI" id="CHEBI:18420"/>
    </cofactor>
</comment>
<comment type="pathway">
    <text evidence="1">Cell wall biogenesis; peptidoglycan biosynthesis.</text>
</comment>
<comment type="subcellular location">
    <subcellularLocation>
        <location evidence="1">Cell inner membrane</location>
        <topology evidence="1">Multi-pass membrane protein</topology>
    </subcellularLocation>
</comment>
<comment type="similarity">
    <text evidence="1">Belongs to the glycosyltransferase 4 family. MraY subfamily.</text>
</comment>
<proteinExistence type="inferred from homology"/>
<accession>B6J2Q9</accession>
<protein>
    <recommendedName>
        <fullName evidence="1">Phospho-N-acetylmuramoyl-pentapeptide-transferase</fullName>
        <ecNumber evidence="1">2.7.8.13</ecNumber>
    </recommendedName>
    <alternativeName>
        <fullName evidence="1">UDP-MurNAc-pentapeptide phosphotransferase</fullName>
    </alternativeName>
</protein>